<gene>
    <name evidence="1" type="primary">leuS</name>
    <name type="ordered locus">RPC_0284</name>
</gene>
<keyword id="KW-0030">Aminoacyl-tRNA synthetase</keyword>
<keyword id="KW-0067">ATP-binding</keyword>
<keyword id="KW-0963">Cytoplasm</keyword>
<keyword id="KW-0436">Ligase</keyword>
<keyword id="KW-0547">Nucleotide-binding</keyword>
<keyword id="KW-0648">Protein biosynthesis</keyword>
<protein>
    <recommendedName>
        <fullName evidence="1">Leucine--tRNA ligase</fullName>
        <ecNumber evidence="1">6.1.1.4</ecNumber>
    </recommendedName>
    <alternativeName>
        <fullName evidence="1">Leucyl-tRNA synthetase</fullName>
        <shortName evidence="1">LeuRS</shortName>
    </alternativeName>
</protein>
<name>SYL_RHOPB</name>
<comment type="catalytic activity">
    <reaction evidence="1">
        <text>tRNA(Leu) + L-leucine + ATP = L-leucyl-tRNA(Leu) + AMP + diphosphate</text>
        <dbReference type="Rhea" id="RHEA:11688"/>
        <dbReference type="Rhea" id="RHEA-COMP:9613"/>
        <dbReference type="Rhea" id="RHEA-COMP:9622"/>
        <dbReference type="ChEBI" id="CHEBI:30616"/>
        <dbReference type="ChEBI" id="CHEBI:33019"/>
        <dbReference type="ChEBI" id="CHEBI:57427"/>
        <dbReference type="ChEBI" id="CHEBI:78442"/>
        <dbReference type="ChEBI" id="CHEBI:78494"/>
        <dbReference type="ChEBI" id="CHEBI:456215"/>
        <dbReference type="EC" id="6.1.1.4"/>
    </reaction>
</comment>
<comment type="subcellular location">
    <subcellularLocation>
        <location evidence="1">Cytoplasm</location>
    </subcellularLocation>
</comment>
<comment type="similarity">
    <text evidence="1">Belongs to the class-I aminoacyl-tRNA synthetase family.</text>
</comment>
<proteinExistence type="inferred from homology"/>
<evidence type="ECO:0000255" key="1">
    <source>
        <dbReference type="HAMAP-Rule" id="MF_00049"/>
    </source>
</evidence>
<feature type="chain" id="PRO_1000009411" description="Leucine--tRNA ligase">
    <location>
        <begin position="1"/>
        <end position="882"/>
    </location>
</feature>
<feature type="short sequence motif" description="'HIGH' region">
    <location>
        <begin position="43"/>
        <end position="53"/>
    </location>
</feature>
<feature type="short sequence motif" description="'KMSKS' region">
    <location>
        <begin position="634"/>
        <end position="638"/>
    </location>
</feature>
<feature type="binding site" evidence="1">
    <location>
        <position position="637"/>
    </location>
    <ligand>
        <name>ATP</name>
        <dbReference type="ChEBI" id="CHEBI:30616"/>
    </ligand>
</feature>
<accession>Q21CM7</accession>
<reference key="1">
    <citation type="submission" date="2006-03" db="EMBL/GenBank/DDBJ databases">
        <title>Complete sequence of Rhodopseudomonas palustris BisB18.</title>
        <authorList>
            <consortium name="US DOE Joint Genome Institute"/>
            <person name="Copeland A."/>
            <person name="Lucas S."/>
            <person name="Lapidus A."/>
            <person name="Barry K."/>
            <person name="Detter J.C."/>
            <person name="Glavina del Rio T."/>
            <person name="Hammon N."/>
            <person name="Israni S."/>
            <person name="Dalin E."/>
            <person name="Tice H."/>
            <person name="Pitluck S."/>
            <person name="Chain P."/>
            <person name="Malfatti S."/>
            <person name="Shin M."/>
            <person name="Vergez L."/>
            <person name="Schmutz J."/>
            <person name="Larimer F."/>
            <person name="Land M."/>
            <person name="Hauser L."/>
            <person name="Pelletier D.A."/>
            <person name="Kyrpides N."/>
            <person name="Anderson I."/>
            <person name="Oda Y."/>
            <person name="Harwood C.S."/>
            <person name="Richardson P."/>
        </authorList>
    </citation>
    <scope>NUCLEOTIDE SEQUENCE [LARGE SCALE GENOMIC DNA]</scope>
    <source>
        <strain>BisB18</strain>
    </source>
</reference>
<sequence length="882" mass="98244">MTNERYNARESEPRWQRQWDDNAIFATQNDDPRPKYYVLEMFPYPSGRIHMGHVRNYTMGDVVARTMRARGYNVLHPMGWDAFGMPAENAAMANKVHPKSWTYANIATMKAQLKSMGLSLDWSREFATCDPSYYKHQQRMFIDFLAAGLVERKQSKVNWDPVDNTVLANEQVIDGRGWRSGALVEQRELTQWFFKISKYSEDLLTALDRLDRWPDKVRIMQRNWIGRSEGLLLRFALDTSTTPNHETEVEVFTTRPDTLFGAKFVALSPDHPLAAEAAKSNPALAAFIEECRKTGTAQAEIDTAEKQGFDTGIRAVHPFDPSWQLPVYVANFVLMDYGTGAIFGCPAHDQRDLDFVNKYGLGNLPVVCPEGQDPATFVVTDIAYDGDGRLINSNNGFIALDGMSIADAKEAVAKRLEAIALGNRPVAQRQVNFRLRDWGISRQRYWGCPIPIIHCEVCGVVPVPIKDLPVKLPDDIEFDRPGNPLDRHPTWKHVACPQCGGKARRETDTMDTFVDSSWYFSRFTDPWNEDAPTTRAVVDRMMPVDQYIGGVEHAILHLLYSRFFTRAMQATGHVGFDEPFRGMFTQGMVVHETYRKLDGTFASPAEIRIVADGDNRLASLLDSGQPVEIGPIEKMSKSKRNTVDPDDIIGSYGADTARWFMLSDSPPDRDVIWSEDGVKGASRFVQRVWRLVSAMAPQLPAPGTRLDAANHPAAQALRVAAHRTLSEILAGIDRLRFNTAVAKLYVYVGELEAVLANAPQGGLGGDPVLAAAAREAIDILVLLIAPMMPHLAEECWAAIGHSGLVSEARWPEIETALLVSDSITLPVQVNGKKRGEVTVARDAQNPQIEAAVLALDAVKQALDGKPVRKIIIVPQRIVNVVG</sequence>
<organism>
    <name type="scientific">Rhodopseudomonas palustris (strain BisB18)</name>
    <dbReference type="NCBI Taxonomy" id="316056"/>
    <lineage>
        <taxon>Bacteria</taxon>
        <taxon>Pseudomonadati</taxon>
        <taxon>Pseudomonadota</taxon>
        <taxon>Alphaproteobacteria</taxon>
        <taxon>Hyphomicrobiales</taxon>
        <taxon>Nitrobacteraceae</taxon>
        <taxon>Rhodopseudomonas</taxon>
    </lineage>
</organism>
<dbReference type="EC" id="6.1.1.4" evidence="1"/>
<dbReference type="EMBL" id="CP000301">
    <property type="protein sequence ID" value="ABD85859.1"/>
    <property type="molecule type" value="Genomic_DNA"/>
</dbReference>
<dbReference type="SMR" id="Q21CM7"/>
<dbReference type="STRING" id="316056.RPC_0284"/>
<dbReference type="KEGG" id="rpc:RPC_0284"/>
<dbReference type="eggNOG" id="COG0495">
    <property type="taxonomic scope" value="Bacteria"/>
</dbReference>
<dbReference type="HOGENOM" id="CLU_004427_0_0_5"/>
<dbReference type="OrthoDB" id="9810365at2"/>
<dbReference type="GO" id="GO:0005829">
    <property type="term" value="C:cytosol"/>
    <property type="evidence" value="ECO:0007669"/>
    <property type="project" value="TreeGrafter"/>
</dbReference>
<dbReference type="GO" id="GO:0002161">
    <property type="term" value="F:aminoacyl-tRNA deacylase activity"/>
    <property type="evidence" value="ECO:0007669"/>
    <property type="project" value="InterPro"/>
</dbReference>
<dbReference type="GO" id="GO:0005524">
    <property type="term" value="F:ATP binding"/>
    <property type="evidence" value="ECO:0007669"/>
    <property type="project" value="UniProtKB-UniRule"/>
</dbReference>
<dbReference type="GO" id="GO:0004823">
    <property type="term" value="F:leucine-tRNA ligase activity"/>
    <property type="evidence" value="ECO:0007669"/>
    <property type="project" value="UniProtKB-UniRule"/>
</dbReference>
<dbReference type="GO" id="GO:0006429">
    <property type="term" value="P:leucyl-tRNA aminoacylation"/>
    <property type="evidence" value="ECO:0007669"/>
    <property type="project" value="UniProtKB-UniRule"/>
</dbReference>
<dbReference type="CDD" id="cd07958">
    <property type="entry name" value="Anticodon_Ia_Leu_BEm"/>
    <property type="match status" value="1"/>
</dbReference>
<dbReference type="CDD" id="cd00812">
    <property type="entry name" value="LeuRS_core"/>
    <property type="match status" value="1"/>
</dbReference>
<dbReference type="FunFam" id="1.10.730.10:FF:000002">
    <property type="entry name" value="Leucine--tRNA ligase"/>
    <property type="match status" value="1"/>
</dbReference>
<dbReference type="FunFam" id="3.10.20.590:FF:000001">
    <property type="entry name" value="Leucine--tRNA ligase"/>
    <property type="match status" value="1"/>
</dbReference>
<dbReference type="FunFam" id="3.40.50.620:FF:000003">
    <property type="entry name" value="Leucine--tRNA ligase"/>
    <property type="match status" value="1"/>
</dbReference>
<dbReference type="Gene3D" id="2.20.28.290">
    <property type="match status" value="1"/>
</dbReference>
<dbReference type="Gene3D" id="3.10.20.590">
    <property type="match status" value="1"/>
</dbReference>
<dbReference type="Gene3D" id="3.40.50.620">
    <property type="entry name" value="HUPs"/>
    <property type="match status" value="2"/>
</dbReference>
<dbReference type="Gene3D" id="1.10.730.10">
    <property type="entry name" value="Isoleucyl-tRNA Synthetase, Domain 1"/>
    <property type="match status" value="2"/>
</dbReference>
<dbReference type="HAMAP" id="MF_00049_B">
    <property type="entry name" value="Leu_tRNA_synth_B"/>
    <property type="match status" value="1"/>
</dbReference>
<dbReference type="InterPro" id="IPR001412">
    <property type="entry name" value="aa-tRNA-synth_I_CS"/>
</dbReference>
<dbReference type="InterPro" id="IPR002300">
    <property type="entry name" value="aa-tRNA-synth_Ia"/>
</dbReference>
<dbReference type="InterPro" id="IPR002302">
    <property type="entry name" value="Leu-tRNA-ligase"/>
</dbReference>
<dbReference type="InterPro" id="IPR025709">
    <property type="entry name" value="Leu_tRNA-synth_edit"/>
</dbReference>
<dbReference type="InterPro" id="IPR013155">
    <property type="entry name" value="M/V/L/I-tRNA-synth_anticd-bd"/>
</dbReference>
<dbReference type="InterPro" id="IPR015413">
    <property type="entry name" value="Methionyl/Leucyl_tRNA_Synth"/>
</dbReference>
<dbReference type="InterPro" id="IPR014729">
    <property type="entry name" value="Rossmann-like_a/b/a_fold"/>
</dbReference>
<dbReference type="InterPro" id="IPR009080">
    <property type="entry name" value="tRNAsynth_Ia_anticodon-bd"/>
</dbReference>
<dbReference type="InterPro" id="IPR009008">
    <property type="entry name" value="Val/Leu/Ile-tRNA-synth_edit"/>
</dbReference>
<dbReference type="NCBIfam" id="TIGR00396">
    <property type="entry name" value="leuS_bact"/>
    <property type="match status" value="1"/>
</dbReference>
<dbReference type="PANTHER" id="PTHR43740:SF2">
    <property type="entry name" value="LEUCINE--TRNA LIGASE, MITOCHONDRIAL"/>
    <property type="match status" value="1"/>
</dbReference>
<dbReference type="PANTHER" id="PTHR43740">
    <property type="entry name" value="LEUCYL-TRNA SYNTHETASE"/>
    <property type="match status" value="1"/>
</dbReference>
<dbReference type="Pfam" id="PF08264">
    <property type="entry name" value="Anticodon_1"/>
    <property type="match status" value="1"/>
</dbReference>
<dbReference type="Pfam" id="PF00133">
    <property type="entry name" value="tRNA-synt_1"/>
    <property type="match status" value="2"/>
</dbReference>
<dbReference type="Pfam" id="PF13603">
    <property type="entry name" value="tRNA-synt_1_2"/>
    <property type="match status" value="1"/>
</dbReference>
<dbReference type="Pfam" id="PF09334">
    <property type="entry name" value="tRNA-synt_1g"/>
    <property type="match status" value="1"/>
</dbReference>
<dbReference type="PRINTS" id="PR00985">
    <property type="entry name" value="TRNASYNTHLEU"/>
</dbReference>
<dbReference type="SUPFAM" id="SSF47323">
    <property type="entry name" value="Anticodon-binding domain of a subclass of class I aminoacyl-tRNA synthetases"/>
    <property type="match status" value="1"/>
</dbReference>
<dbReference type="SUPFAM" id="SSF52374">
    <property type="entry name" value="Nucleotidylyl transferase"/>
    <property type="match status" value="1"/>
</dbReference>
<dbReference type="SUPFAM" id="SSF50677">
    <property type="entry name" value="ValRS/IleRS/LeuRS editing domain"/>
    <property type="match status" value="1"/>
</dbReference>
<dbReference type="PROSITE" id="PS00178">
    <property type="entry name" value="AA_TRNA_LIGASE_I"/>
    <property type="match status" value="1"/>
</dbReference>